<keyword id="KW-0963">Cytoplasm</keyword>
<keyword id="KW-0274">FAD</keyword>
<keyword id="KW-0285">Flavoprotein</keyword>
<keyword id="KW-1017">Isopeptide bond</keyword>
<keyword id="KW-0520">NAD</keyword>
<keyword id="KW-0521">NADP</keyword>
<keyword id="KW-0560">Oxidoreductase</keyword>
<keyword id="KW-0597">Phosphoprotein</keyword>
<keyword id="KW-1185">Reference proteome</keyword>
<keyword id="KW-0832">Ubl conjugation</keyword>
<protein>
    <recommendedName>
        <fullName>NAD(P)H dehydrogenase [quinone] 1</fullName>
        <ecNumber evidence="3">1.6.5.2</ecNumber>
    </recommendedName>
    <alternativeName>
        <fullName>Azoreductase</fullName>
    </alternativeName>
    <alternativeName>
        <fullName evidence="3">DT-diaphorase</fullName>
        <shortName>DTD</shortName>
    </alternativeName>
    <alternativeName>
        <fullName>Menadione reductase</fullName>
    </alternativeName>
    <alternativeName>
        <fullName evidence="3">NAD(P)H:quinone oxidoreductase 1</fullName>
    </alternativeName>
    <alternativeName>
        <fullName>Phylloquinone reductase</fullName>
    </alternativeName>
    <alternativeName>
        <fullName>Quinone reductase 1</fullName>
        <shortName>QR1</shortName>
    </alternativeName>
</protein>
<feature type="chain" id="PRO_0000071624" description="NAD(P)H dehydrogenase [quinone] 1">
    <location>
        <begin position="1"/>
        <end position="274"/>
    </location>
</feature>
<feature type="region of interest" description="Important for apoenzyme conformational stability" evidence="3">
    <location>
        <begin position="225"/>
        <end position="274"/>
    </location>
</feature>
<feature type="binding site" evidence="3">
    <location>
        <position position="12"/>
    </location>
    <ligand>
        <name>FAD</name>
        <dbReference type="ChEBI" id="CHEBI:57692"/>
    </ligand>
</feature>
<feature type="binding site" evidence="3">
    <location>
        <begin position="18"/>
        <end position="19"/>
    </location>
    <ligand>
        <name>FAD</name>
        <dbReference type="ChEBI" id="CHEBI:57692"/>
    </ligand>
</feature>
<feature type="binding site" evidence="3">
    <location>
        <position position="67"/>
    </location>
    <ligand>
        <name>FAD</name>
        <dbReference type="ChEBI" id="CHEBI:57692"/>
    </ligand>
</feature>
<feature type="binding site" evidence="3">
    <location>
        <begin position="104"/>
        <end position="107"/>
    </location>
    <ligand>
        <name>FAD</name>
        <dbReference type="ChEBI" id="CHEBI:57692"/>
    </ligand>
</feature>
<feature type="binding site" evidence="1">
    <location>
        <begin position="126"/>
        <end position="128"/>
    </location>
    <ligand>
        <name>substrate</name>
    </ligand>
</feature>
<feature type="binding site" evidence="3">
    <location>
        <begin position="148"/>
        <end position="151"/>
    </location>
    <ligand>
        <name>FAD</name>
        <dbReference type="ChEBI" id="CHEBI:57692"/>
    </ligand>
</feature>
<feature type="binding site" evidence="3">
    <location>
        <position position="156"/>
    </location>
    <ligand>
        <name>FAD</name>
        <dbReference type="ChEBI" id="CHEBI:57692"/>
    </ligand>
</feature>
<feature type="binding site" evidence="3">
    <location>
        <position position="201"/>
    </location>
    <ligand>
        <name>FAD</name>
        <dbReference type="ChEBI" id="CHEBI:57692"/>
    </ligand>
</feature>
<feature type="modified residue" description="Phosphoserine" evidence="3">
    <location>
        <position position="82"/>
    </location>
</feature>
<feature type="cross-link" description="Glycyl lysine isopeptide (Lys-Gly) (interchain with G-Cter in SUMO2)" evidence="3">
    <location>
        <position position="250"/>
    </location>
</feature>
<feature type="cross-link" description="Glycyl lysine isopeptide (Lys-Gly) (interchain with G-Cter in SUMO2)" evidence="3">
    <location>
        <position position="251"/>
    </location>
</feature>
<comment type="function">
    <text evidence="2 3">Flavin-containing quinone reductase that catalyzes two-electron reduction of quinones to hydroquinones using either NADH or NADPH as electron donors. In a ping-pong kinetic mechanism, the electrons are sequentially transferred from NAD(P)H to flavin cofactor and then from reduced flavin to the quinone, bypassing the formation of semiquinone and reactive oxygen species (By similarity). Regulates cellular redox state primarily through quinone detoxification. Reduces components of plasma membrane redox system such as coenzyme Q and vitamin quinones, producing antioxidant hydroquinone forms. In the process may function as superoxide scavenger to prevent hydroquinone oxidation and facilitate excretion (By similarity). Alternatively, can activate quinones and their derivatives by generating redox reactive hydroquinones with DNA cross-linking antitumor potential (By similarity). Acts as a gatekeeper of the core 20S proteasome known to degrade proteins with unstructured regions. Upon oxidative stress, interacts with tumor suppressors TP53 and TP73 in a NADH-dependent way and inhibits their ubiquitin-independent degradation by the 20S proteasome (By similarity).</text>
</comment>
<comment type="catalytic activity">
    <reaction evidence="3">
        <text>a quinone + NADH + H(+) = a quinol + NAD(+)</text>
        <dbReference type="Rhea" id="RHEA:46160"/>
        <dbReference type="ChEBI" id="CHEBI:15378"/>
        <dbReference type="ChEBI" id="CHEBI:24646"/>
        <dbReference type="ChEBI" id="CHEBI:57540"/>
        <dbReference type="ChEBI" id="CHEBI:57945"/>
        <dbReference type="ChEBI" id="CHEBI:132124"/>
        <dbReference type="EC" id="1.6.5.2"/>
    </reaction>
    <physiologicalReaction direction="left-to-right" evidence="3">
        <dbReference type="Rhea" id="RHEA:46161"/>
    </physiologicalReaction>
</comment>
<comment type="catalytic activity">
    <reaction evidence="3">
        <text>a quinone + NADPH + H(+) = a quinol + NADP(+)</text>
        <dbReference type="Rhea" id="RHEA:46164"/>
        <dbReference type="ChEBI" id="CHEBI:15378"/>
        <dbReference type="ChEBI" id="CHEBI:24646"/>
        <dbReference type="ChEBI" id="CHEBI:57783"/>
        <dbReference type="ChEBI" id="CHEBI:58349"/>
        <dbReference type="ChEBI" id="CHEBI:132124"/>
        <dbReference type="EC" id="1.6.5.2"/>
    </reaction>
    <physiologicalReaction direction="left-to-right" evidence="3">
        <dbReference type="Rhea" id="RHEA:46165"/>
    </physiologicalReaction>
</comment>
<comment type="catalytic activity">
    <reaction evidence="3">
        <text>ubiquinone-10 + NADH + H(+) = ubiquinol-10 + NAD(+)</text>
        <dbReference type="Rhea" id="RHEA:61984"/>
        <dbReference type="ChEBI" id="CHEBI:15378"/>
        <dbReference type="ChEBI" id="CHEBI:46245"/>
        <dbReference type="ChEBI" id="CHEBI:57540"/>
        <dbReference type="ChEBI" id="CHEBI:57945"/>
        <dbReference type="ChEBI" id="CHEBI:64183"/>
    </reaction>
    <physiologicalReaction direction="left-to-right" evidence="3">
        <dbReference type="Rhea" id="RHEA:61985"/>
    </physiologicalReaction>
</comment>
<comment type="catalytic activity">
    <reaction evidence="3">
        <text>menadione + NADH + H(+) = menadiol + NAD(+)</text>
        <dbReference type="Rhea" id="RHEA:69695"/>
        <dbReference type="ChEBI" id="CHEBI:6746"/>
        <dbReference type="ChEBI" id="CHEBI:15378"/>
        <dbReference type="ChEBI" id="CHEBI:28869"/>
        <dbReference type="ChEBI" id="CHEBI:57540"/>
        <dbReference type="ChEBI" id="CHEBI:57945"/>
    </reaction>
    <physiologicalReaction direction="left-to-right" evidence="3">
        <dbReference type="Rhea" id="RHEA:69696"/>
    </physiologicalReaction>
</comment>
<comment type="cofactor">
    <cofactor evidence="3">
        <name>FAD</name>
        <dbReference type="ChEBI" id="CHEBI:57692"/>
    </cofactor>
</comment>
<comment type="subunit">
    <text evidence="3">Homodimer. Interacts with PDLIM4 isoform 2; this interaction stabilizes PDLIM4 isoform 2 in response to oxidative stress and protects it from ubiquitin-independent degradation by the core 20S proteasome. Interacts with TP73 (via SAM domain); this interaction is NADH-dependent, stabilizes TP73 in response to oxidative stress and protects it from ubiquitin-independent degradation by the 20S proteasome. Interacts with TP53; this interaction is NADH-dependent, stabilizes TP53 in response to oxidative stress and protects it from ubiquitin-independent degradation by the 20S proteasome.</text>
</comment>
<comment type="subcellular location">
    <subcellularLocation>
        <location evidence="2">Cytoplasm</location>
        <location evidence="2">Cytosol</location>
    </subcellularLocation>
</comment>
<comment type="similarity">
    <text evidence="4">Belongs to the NAD(P)H dehydrogenase (quinone) family.</text>
</comment>
<reference key="1">
    <citation type="submission" date="2004-11" db="EMBL/GenBank/DDBJ databases">
        <authorList>
            <consortium name="The German cDNA consortium"/>
        </authorList>
    </citation>
    <scope>NUCLEOTIDE SEQUENCE [LARGE SCALE MRNA]</scope>
    <source>
        <tissue>Brain cortex</tissue>
    </source>
</reference>
<gene>
    <name type="primary">NQO1</name>
</gene>
<dbReference type="EC" id="1.6.5.2" evidence="3"/>
<dbReference type="EMBL" id="CR858087">
    <property type="protein sequence ID" value="CAH90326.1"/>
    <property type="molecule type" value="mRNA"/>
</dbReference>
<dbReference type="RefSeq" id="NP_001125152.1">
    <property type="nucleotide sequence ID" value="NM_001131680.1"/>
</dbReference>
<dbReference type="SMR" id="Q5RD31"/>
<dbReference type="FunCoup" id="Q5RD31">
    <property type="interactions" value="611"/>
</dbReference>
<dbReference type="STRING" id="9601.ENSPPYP00000008478"/>
<dbReference type="Ensembl" id="ENSPPYT00000036450.1">
    <property type="protein sequence ID" value="ENSPPYP00000034498.1"/>
    <property type="gene ID" value="ENSPPYG00000007508.3"/>
</dbReference>
<dbReference type="GeneID" id="100172039"/>
<dbReference type="KEGG" id="pon:100172039"/>
<dbReference type="CTD" id="1728"/>
<dbReference type="eggNOG" id="ENOG502QQMI">
    <property type="taxonomic scope" value="Eukaryota"/>
</dbReference>
<dbReference type="GeneTree" id="ENSGT00940000159150"/>
<dbReference type="HOGENOM" id="CLU_058643_2_0_1"/>
<dbReference type="InParanoid" id="Q5RD31"/>
<dbReference type="OMA" id="HGILHYP"/>
<dbReference type="OrthoDB" id="26889at2759"/>
<dbReference type="TreeFam" id="TF300296"/>
<dbReference type="Proteomes" id="UP000001595">
    <property type="component" value="Chromosome 16"/>
</dbReference>
<dbReference type="GO" id="GO:0005829">
    <property type="term" value="C:cytosol"/>
    <property type="evidence" value="ECO:0007669"/>
    <property type="project" value="UniProtKB-SubCell"/>
</dbReference>
<dbReference type="GO" id="GO:0005634">
    <property type="term" value="C:nucleus"/>
    <property type="evidence" value="ECO:0007669"/>
    <property type="project" value="Ensembl"/>
</dbReference>
<dbReference type="GO" id="GO:0042802">
    <property type="term" value="F:identical protein binding"/>
    <property type="evidence" value="ECO:0007669"/>
    <property type="project" value="Ensembl"/>
</dbReference>
<dbReference type="GO" id="GO:0050136">
    <property type="term" value="F:NADH:ubiquinone reductase (non-electrogenic) activity"/>
    <property type="evidence" value="ECO:0000250"/>
    <property type="project" value="UniProtKB"/>
</dbReference>
<dbReference type="GO" id="GO:0008753">
    <property type="term" value="F:NADPH dehydrogenase (quinone) activity"/>
    <property type="evidence" value="ECO:0007669"/>
    <property type="project" value="RHEA"/>
</dbReference>
<dbReference type="GO" id="GO:0045454">
    <property type="term" value="P:cell redox homeostasis"/>
    <property type="evidence" value="ECO:0007669"/>
    <property type="project" value="Ensembl"/>
</dbReference>
<dbReference type="GO" id="GO:0034599">
    <property type="term" value="P:cellular response to oxidative stress"/>
    <property type="evidence" value="ECO:0000250"/>
    <property type="project" value="UniProtKB"/>
</dbReference>
<dbReference type="GO" id="GO:0045087">
    <property type="term" value="P:innate immune response"/>
    <property type="evidence" value="ECO:0007669"/>
    <property type="project" value="Ensembl"/>
</dbReference>
<dbReference type="GO" id="GO:0110076">
    <property type="term" value="P:negative regulation of ferroptosis"/>
    <property type="evidence" value="ECO:0000250"/>
    <property type="project" value="UniProtKB"/>
</dbReference>
<dbReference type="GO" id="GO:0042177">
    <property type="term" value="P:negative regulation of protein catabolic process"/>
    <property type="evidence" value="ECO:0000250"/>
    <property type="project" value="UniProtKB"/>
</dbReference>
<dbReference type="GO" id="GO:0030163">
    <property type="term" value="P:protein catabolic process"/>
    <property type="evidence" value="ECO:0007669"/>
    <property type="project" value="Ensembl"/>
</dbReference>
<dbReference type="GO" id="GO:0000209">
    <property type="term" value="P:protein polyubiquitination"/>
    <property type="evidence" value="ECO:0007669"/>
    <property type="project" value="Ensembl"/>
</dbReference>
<dbReference type="GO" id="GO:0019430">
    <property type="term" value="P:removal of superoxide radicals"/>
    <property type="evidence" value="ECO:0000250"/>
    <property type="project" value="UniProtKB"/>
</dbReference>
<dbReference type="GO" id="GO:0032496">
    <property type="term" value="P:response to lipopolysaccharide"/>
    <property type="evidence" value="ECO:0007669"/>
    <property type="project" value="Ensembl"/>
</dbReference>
<dbReference type="GO" id="GO:0006743">
    <property type="term" value="P:ubiquinone metabolic process"/>
    <property type="evidence" value="ECO:0000250"/>
    <property type="project" value="UniProtKB"/>
</dbReference>
<dbReference type="GO" id="GO:0042360">
    <property type="term" value="P:vitamin E metabolic process"/>
    <property type="evidence" value="ECO:0000250"/>
    <property type="project" value="UniProtKB"/>
</dbReference>
<dbReference type="GO" id="GO:0042373">
    <property type="term" value="P:vitamin K metabolic process"/>
    <property type="evidence" value="ECO:0000250"/>
    <property type="project" value="UniProtKB"/>
</dbReference>
<dbReference type="FunFam" id="3.40.50.360:FF:000029">
    <property type="entry name" value="NAD(P)H dehydrogenase [quinone] 1"/>
    <property type="match status" value="1"/>
</dbReference>
<dbReference type="Gene3D" id="3.40.50.360">
    <property type="match status" value="1"/>
</dbReference>
<dbReference type="InterPro" id="IPR003680">
    <property type="entry name" value="Flavodoxin_fold"/>
</dbReference>
<dbReference type="InterPro" id="IPR029039">
    <property type="entry name" value="Flavoprotein-like_sf"/>
</dbReference>
<dbReference type="InterPro" id="IPR051545">
    <property type="entry name" value="NAD(P)H_dehydrogenase_qn"/>
</dbReference>
<dbReference type="PANTHER" id="PTHR10204">
    <property type="entry name" value="NAD P H OXIDOREDUCTASE-RELATED"/>
    <property type="match status" value="1"/>
</dbReference>
<dbReference type="PANTHER" id="PTHR10204:SF1">
    <property type="entry name" value="NAD(P)H DEHYDROGENASE [QUINONE] 1"/>
    <property type="match status" value="1"/>
</dbReference>
<dbReference type="Pfam" id="PF02525">
    <property type="entry name" value="Flavodoxin_2"/>
    <property type="match status" value="1"/>
</dbReference>
<dbReference type="SUPFAM" id="SSF52218">
    <property type="entry name" value="Flavoproteins"/>
    <property type="match status" value="1"/>
</dbReference>
<proteinExistence type="evidence at transcript level"/>
<sequence length="274" mass="30940">MVGRRALIVLAHSERTSFNYAMKEAAVAALKKKGWEVVESDLYAMNFNPIISRKDITGKLKDPENFQYPAESVLAYKEGHLSPDIVAEQKKLEAADLVIFQFPLQWFGVPAILKGWFERVFVGEFAYTYAAMYDKGPFRSKKAVLSITTGGSGSMYSLQGIHGDMNVILWPIQSGILHFCGFQVLEPQLTYSIGHTPADARIQILEGWKKRLENIWDETPLYFAPSSLFDLNFQAGFLMKKEVQDEEKNKKFGLSVGHHLGKSIPTDNQIKARK</sequence>
<name>NQO1_PONAB</name>
<organism>
    <name type="scientific">Pongo abelii</name>
    <name type="common">Sumatran orangutan</name>
    <name type="synonym">Pongo pygmaeus abelii</name>
    <dbReference type="NCBI Taxonomy" id="9601"/>
    <lineage>
        <taxon>Eukaryota</taxon>
        <taxon>Metazoa</taxon>
        <taxon>Chordata</taxon>
        <taxon>Craniata</taxon>
        <taxon>Vertebrata</taxon>
        <taxon>Euteleostomi</taxon>
        <taxon>Mammalia</taxon>
        <taxon>Eutheria</taxon>
        <taxon>Euarchontoglires</taxon>
        <taxon>Primates</taxon>
        <taxon>Haplorrhini</taxon>
        <taxon>Catarrhini</taxon>
        <taxon>Hominidae</taxon>
        <taxon>Pongo</taxon>
    </lineage>
</organism>
<evidence type="ECO:0000250" key="1"/>
<evidence type="ECO:0000250" key="2">
    <source>
        <dbReference type="UniProtKB" id="P05982"/>
    </source>
</evidence>
<evidence type="ECO:0000250" key="3">
    <source>
        <dbReference type="UniProtKB" id="P15559"/>
    </source>
</evidence>
<evidence type="ECO:0000305" key="4"/>
<accession>Q5RD31</accession>